<sequence>MPLFMPDEELARLSSDAASVVAERADEYIRKIYAELDSVRAKADAASITAEQTCSLLEQKYLSLSQDFSSLESQNAKLQSDFDDRLAELAQSQAQKHQLHLQSIEKDGEVERMSTEMSELHKSKRQLMELLEQKDAEISEKNSTIKSYLDKIVKLTDTSSEKEARLAEATAELARSQAMCSRLSQEKELTERHAKWLDEELTAKVDSYAELRRRHSDLESEMSAKLVDVEKNYIECSSSLNWHKERLRELETKIGSLQEDLSSCKDAATTTEEQYTAELFTANKLVDLYKESSEEWSRKAGELEGVIKALEARLSQVESSYKERLDKEVSTKQLLEKENGDLKQKLEKCEAEIEKTRKTDELNLIPFSNFTRRVDNSGTSNMIEESQAVISKVPAGVSGTALAASLLRDGWSLAKIYEKYQEAVDAMRHEQLGRKEAEMILQRVLSELEEKAGFIQEERGEYERVVEAYCLVNQKLQDSVSEQSNMEKFIMELKADLRRRERENTLLQKDISDLQKQVTILLKECRDVQLRCGAARDDDEDDYPLLSDVEMEMESEADKIISEHLLKFKDINGLVEQNVKLRNLVRSLSEQIESRETELKETFEVDLKNKTDEASAKVATVLKRAEEQGQMIESLHTSVAMYKRLYEEEQKLHSSDSRSSDLSPAVVPGRKNFLHLLEDSEEATKRAQEKAFERIRILEEDFAKARSEVIAIRSERDKLAMEANFAREKLEGIMKESERKREEMNSVLARNIEFSQLIIDHQRKLRESSESLHAAEEISRKLSMEVSVLKQEKELLSNAEKRASDEVSALSQRVYRLQATLDTVQSTEEVREETRAAERRKQEEHIKQLQREWAEAKKELQEERSNARDFTSDRNQTLNNAVMQVEEMGKELANALKAVSVAESRASVAEARLSDLEKKIRSSDPKTLDMDSGGIVSLSDKEMSIELRTAKEEIEKLRGEVESSKSHMLQYKSIAQVNETALKQMESAHENFRLEAEKRQRSLEAELVSLRERVSELENDCIQKSEQLATAAAGKEDALLSASAEIASLREENLVKKSQIEAMNIQMSTLKNDLETEHEKWRVAQRNYERQVILLSETIQELTKTSQALAALQEEASELRKLADARGIENSELNAKWSEEKLMLEQQKNLAEKKYHELNEQNKLLHSRLEAKHLNSAEKNSRSGTISSGSTDSDHLEDSGLQRVVHYLRRTKEIAETEISLMRQEKLRLQSQLESALKMAESARGSLTAERASTRASLLTDDGIKSLQLQVSEMNLLRESNMQLREENKHNFEKCQEMREVAQKARMESENFENLLKTKQTELDLCMKEMEKLRMETDLHKKRVDELRETYRNIDIADYNRLKDEVRQLEEKLKAKDAHAEDCKKVLLEKQNKISLLEKELTNCKKDLSEREKRLDDAQQAQATMQSEFNKQKQELEKNKKIHYTLNMTKRKYEKEKDELSKQNQSLAKQLEEAKEEAGKRTTTDAVVEQSVKEREEKEKRIQILDKYVHQLKDEVRKKTEDLKKKDEELTKERSERKSVEKEVGDSLTKIKKEKTKVDEELAKLERYQTALTHLSEELEKLKHADGNLPEGTSAVQVLSGSILNDQAAAYVSAVEYFERVARSIASNSQVSTKPTDMVTEPSSGIPAAEPSTMTRVPSSTPLIKSPVATTQQLPKVASDNKEKRLISQKPSTEFRRPSGRRIVRPQLVKPEESPKVDVDMPEAEGTGDEGKQPAAHEPESQVTTSVRPVQTLVRKRQADSLVSEPQQDSLTQGETSSEIAPPASKKAKGSESHPDTSEGENLAKEPAIDELMDATTTTDGDNEETEAENAEEKTEEYVEAQQDNEADEPVEESPTETETIPTEEESRDQTEEENQEPLTDMESDKEEGELDLDTLEDLEEGTDVASMMRSPEKEEVQPETLATPTQSPSRMETAMEEAETTIETPVEDDKTDEGGDAAEEAADIPNNANDQQEAPETDIKPETSAATTSPVSTAPTTSSTLASAITSSGAPETEDPKRAPSPGGGSSTIVTLADRAQMKRRERIANIVVSRAPNPATRGARGRTVNLRGGGRLLPRGGRAPRGGRGQSPSPP</sequence>
<name>NUA_ARATH</name>
<feature type="chain" id="PRO_0000395976" description="Nuclear-pore anchor">
    <location>
        <begin position="1"/>
        <end position="2093"/>
    </location>
</feature>
<feature type="region of interest" description="Disordered" evidence="2">
    <location>
        <begin position="1175"/>
        <end position="1198"/>
    </location>
</feature>
<feature type="region of interest" description="Disordered" evidence="2">
    <location>
        <begin position="1453"/>
        <end position="1489"/>
    </location>
</feature>
<feature type="region of interest" description="Disordered" evidence="2">
    <location>
        <begin position="1525"/>
        <end position="1555"/>
    </location>
</feature>
<feature type="region of interest" description="Disordered" evidence="2">
    <location>
        <begin position="1627"/>
        <end position="2093"/>
    </location>
</feature>
<feature type="coiled-coil region" evidence="1">
    <location>
        <begin position="57"/>
        <end position="362"/>
    </location>
</feature>
<feature type="coiled-coil region" evidence="1">
    <location>
        <begin position="439"/>
        <end position="529"/>
    </location>
</feature>
<feature type="coiled-coil region" evidence="1">
    <location>
        <begin position="570"/>
        <end position="627"/>
    </location>
</feature>
<feature type="coiled-coil region" evidence="1">
    <location>
        <begin position="688"/>
        <end position="1172"/>
    </location>
</feature>
<feature type="coiled-coil region" evidence="1">
    <location>
        <begin position="1208"/>
        <end position="1252"/>
    </location>
</feature>
<feature type="coiled-coil region" evidence="1">
    <location>
        <begin position="1293"/>
        <end position="1585"/>
    </location>
</feature>
<feature type="coiled-coil region" evidence="1">
    <location>
        <begin position="1818"/>
        <end position="1849"/>
    </location>
</feature>
<feature type="compositionally biased region" description="Low complexity" evidence="2">
    <location>
        <begin position="1182"/>
        <end position="1191"/>
    </location>
</feature>
<feature type="compositionally biased region" description="Basic and acidic residues" evidence="2">
    <location>
        <begin position="1470"/>
        <end position="1483"/>
    </location>
</feature>
<feature type="compositionally biased region" description="Polar residues" evidence="2">
    <location>
        <begin position="1652"/>
        <end position="1674"/>
    </location>
</feature>
<feature type="compositionally biased region" description="Basic and acidic residues" evidence="2">
    <location>
        <begin position="1710"/>
        <end position="1719"/>
    </location>
</feature>
<feature type="compositionally biased region" description="Basic and acidic residues" evidence="2">
    <location>
        <begin position="1729"/>
        <end position="1740"/>
    </location>
</feature>
<feature type="compositionally biased region" description="Polar residues" evidence="2">
    <location>
        <begin position="1764"/>
        <end position="1779"/>
    </location>
</feature>
<feature type="compositionally biased region" description="Basic and acidic residues" evidence="2">
    <location>
        <begin position="1789"/>
        <end position="1808"/>
    </location>
</feature>
<feature type="compositionally biased region" description="Acidic residues" evidence="2">
    <location>
        <begin position="1821"/>
        <end position="1830"/>
    </location>
</feature>
<feature type="compositionally biased region" description="Acidic residues" evidence="2">
    <location>
        <begin position="1838"/>
        <end position="1903"/>
    </location>
</feature>
<feature type="compositionally biased region" description="Polar residues" evidence="2">
    <location>
        <begin position="1921"/>
        <end position="1931"/>
    </location>
</feature>
<feature type="compositionally biased region" description="Acidic residues" evidence="2">
    <location>
        <begin position="1935"/>
        <end position="1963"/>
    </location>
</feature>
<feature type="compositionally biased region" description="Low complexity" evidence="2">
    <location>
        <begin position="1984"/>
        <end position="2009"/>
    </location>
</feature>
<feature type="modified residue" description="Phosphoserine" evidence="20">
    <location>
        <position position="2022"/>
    </location>
</feature>
<feature type="splice variant" id="VSP_057127" description="In isoform 3.">
    <original>SVLKQE</original>
    <variation>VYHHPLK</variation>
    <location>
        <begin position="787"/>
        <end position="792"/>
    </location>
</feature>
<feature type="splice variant" id="VSP_057128" description="In isoform 2.">
    <original>E</original>
    <variation>EAALVIILDVVHKIQAGFRIGSA</variation>
    <location>
        <position position="942"/>
    </location>
</feature>
<comment type="function">
    <text evidence="3 4 5 6 11">Component of the nuclear pore complex. Acts as a docking site for activities required for desumoylation and mRNA export. Required for the proper expression or localization of a subset of miRNAs. Plays a role in meristematic cell division by interacting with spindle assembly checkpoint proteins.</text>
</comment>
<comment type="subunit">
    <text evidence="3 8 14">Part of the nuclear pore complex (NPC). The NPC has an eight-fold symmetrical structure comprising a central transport channel and two rings, the cytoplasmic and nuclear rings, to which eight filaments are attached. The cytoplasmic filaments have loose ends, while the nuclear filaments are joined in a distal ring, forming a nuclear basket. NPCs are highly dynamic in configuration and composition, and can be devided in 3 subcomplexes, the NUP62 subcomplex, the NUP107-160 subcomplex and the NUP93 subcomplex, containing approximately 30 different nucleoporin proteins. Interacts with MAD1 and (via N-terminus) with ESD4.</text>
</comment>
<comment type="subcellular location">
    <subcellularLocation>
        <location evidence="3 5 7">Nucleus envelope</location>
    </subcellularLocation>
    <subcellularLocation>
        <location evidence="5">Nucleus membrane</location>
        <topology evidence="5">Peripheral membrane protein</topology>
        <orientation evidence="5">Nucleoplasmic side</orientation>
    </subcellularLocation>
    <subcellularLocation>
        <location evidence="5">Nucleus</location>
        <location evidence="5">Nuclear pore complex</location>
    </subcellularLocation>
    <text evidence="3 5">Located at the inner surface of the nuclear envelope during interphase and in the vicinity of the spindle during prometaphase.</text>
</comment>
<comment type="alternative products">
    <event type="alternative splicing"/>
    <isoform>
        <id>A4GSN8-1</id>
        <name>1</name>
        <sequence type="displayed"/>
    </isoform>
    <isoform>
        <id>A4GSN8-2</id>
        <name>2</name>
        <sequence type="described" ref="VSP_057128"/>
    </isoform>
    <isoform>
        <id>A4GSN8-3</id>
        <name>3</name>
        <sequence type="described" ref="VSP_057127"/>
    </isoform>
</comment>
<comment type="tissue specificity">
    <text evidence="3 4">Ubiquitous. Highest expression in the shoot apical region.</text>
</comment>
<comment type="induction">
    <text evidence="4">Not induced by vernalization.</text>
</comment>
<comment type="domain">
    <text>The N-terminal domain is involved in RNA and SUMO homeostasis while the C-terminal part is required for nuclear pore association.</text>
</comment>
<comment type="disruption phenotype">
    <text evidence="3 4 11">Early flowering under both long and short days and pleiotropic alterations in shoot development and auxin signaling. Stunted primary root development in the absence of sucrose. Accumulation of nuclear poly(A)+ RNA and high-molecular weight SUMO conjugates.</text>
</comment>
<comment type="sequence caution" evidence="13">
    <conflict type="erroneous gene model prediction">
        <sequence resource="EMBL-CDS" id="AAC17058"/>
    </conflict>
</comment>
<comment type="sequence caution" evidence="13">
    <conflict type="erroneous gene model prediction">
        <sequence resource="EMBL-CDS" id="AAC17060"/>
    </conflict>
</comment>
<comment type="sequence caution" evidence="13">
    <conflict type="erroneous gene model prediction">
        <sequence resource="EMBL-CDS" id="AAC17073"/>
    </conflict>
</comment>
<comment type="sequence caution" evidence="13">
    <conflict type="erroneous gene model prediction">
        <sequence resource="EMBL-CDS" id="AAC17074"/>
    </conflict>
</comment>
<keyword id="KW-0025">Alternative splicing</keyword>
<keyword id="KW-0175">Coiled coil</keyword>
<keyword id="KW-0472">Membrane</keyword>
<keyword id="KW-0509">mRNA transport</keyword>
<keyword id="KW-0906">Nuclear pore complex</keyword>
<keyword id="KW-0539">Nucleus</keyword>
<keyword id="KW-0597">Phosphoprotein</keyword>
<keyword id="KW-0653">Protein transport</keyword>
<keyword id="KW-1185">Reference proteome</keyword>
<keyword id="KW-0811">Translocation</keyword>
<keyword id="KW-0813">Transport</keyword>
<proteinExistence type="evidence at protein level"/>
<dbReference type="EMBL" id="EF426860">
    <property type="protein sequence ID" value="ABO21684.1"/>
    <property type="molecule type" value="mRNA"/>
</dbReference>
<dbReference type="EMBL" id="AC002986">
    <property type="protein sequence ID" value="AAC17058.1"/>
    <property type="status" value="ALT_SEQ"/>
    <property type="molecule type" value="Genomic_DNA"/>
</dbReference>
<dbReference type="EMBL" id="AC002986">
    <property type="protein sequence ID" value="AAC17060.1"/>
    <property type="status" value="ALT_SEQ"/>
    <property type="molecule type" value="Genomic_DNA"/>
</dbReference>
<dbReference type="EMBL" id="AC002986">
    <property type="protein sequence ID" value="AAC17073.1"/>
    <property type="status" value="ALT_SEQ"/>
    <property type="molecule type" value="Genomic_DNA"/>
</dbReference>
<dbReference type="EMBL" id="AC002986">
    <property type="protein sequence ID" value="AAC17074.1"/>
    <property type="status" value="ALT_SEQ"/>
    <property type="molecule type" value="Genomic_DNA"/>
</dbReference>
<dbReference type="EMBL" id="CP002684">
    <property type="protein sequence ID" value="AEE36226.1"/>
    <property type="molecule type" value="Genomic_DNA"/>
</dbReference>
<dbReference type="EMBL" id="CP002684">
    <property type="protein sequence ID" value="AEE36227.1"/>
    <property type="molecule type" value="Genomic_DNA"/>
</dbReference>
<dbReference type="EMBL" id="CP002684">
    <property type="protein sequence ID" value="AEE36228.1"/>
    <property type="molecule type" value="Genomic_DNA"/>
</dbReference>
<dbReference type="EMBL" id="AF083705">
    <property type="protein sequence ID" value="AAN60264.1"/>
    <property type="molecule type" value="mRNA"/>
</dbReference>
<dbReference type="PIR" id="T01025">
    <property type="entry name" value="T01025"/>
</dbReference>
<dbReference type="PIR" id="T01026">
    <property type="entry name" value="T01026"/>
</dbReference>
<dbReference type="PIR" id="T01028">
    <property type="entry name" value="T01028"/>
</dbReference>
<dbReference type="PIR" id="T01029">
    <property type="entry name" value="T01029"/>
</dbReference>
<dbReference type="RefSeq" id="NP_001185435.1">
    <molecule id="A4GSN8-3"/>
    <property type="nucleotide sequence ID" value="NM_001198506.1"/>
</dbReference>
<dbReference type="RefSeq" id="NP_001185436.1">
    <molecule id="A4GSN8-2"/>
    <property type="nucleotide sequence ID" value="NM_001198507.1"/>
</dbReference>
<dbReference type="RefSeq" id="NP_178048.2">
    <molecule id="A4GSN8-1"/>
    <property type="nucleotide sequence ID" value="NM_106578.3"/>
</dbReference>
<dbReference type="SMR" id="A4GSN8"/>
<dbReference type="BioGRID" id="29487">
    <property type="interactions" value="8"/>
</dbReference>
<dbReference type="FunCoup" id="A4GSN8">
    <property type="interactions" value="4035"/>
</dbReference>
<dbReference type="IntAct" id="A4GSN8">
    <property type="interactions" value="1"/>
</dbReference>
<dbReference type="STRING" id="3702.A4GSN8"/>
<dbReference type="iPTMnet" id="A4GSN8"/>
<dbReference type="PaxDb" id="3702-AT1G79280.2"/>
<dbReference type="ProteomicsDB" id="248663">
    <molecule id="A4GSN8-1"/>
</dbReference>
<dbReference type="EnsemblPlants" id="AT1G79280.1">
    <molecule id="A4GSN8-1"/>
    <property type="protein sequence ID" value="AT1G79280.1"/>
    <property type="gene ID" value="AT1G79280"/>
</dbReference>
<dbReference type="EnsemblPlants" id="AT1G79280.2">
    <molecule id="A4GSN8-2"/>
    <property type="protein sequence ID" value="AT1G79280.2"/>
    <property type="gene ID" value="AT1G79280"/>
</dbReference>
<dbReference type="EnsemblPlants" id="AT1G79280.3">
    <molecule id="A4GSN8-3"/>
    <property type="protein sequence ID" value="AT1G79280.3"/>
    <property type="gene ID" value="AT1G79280"/>
</dbReference>
<dbReference type="GeneID" id="844268"/>
<dbReference type="Gramene" id="AT1G79280.1">
    <molecule id="A4GSN8-1"/>
    <property type="protein sequence ID" value="AT1G79280.1"/>
    <property type="gene ID" value="AT1G79280"/>
</dbReference>
<dbReference type="Gramene" id="AT1G79280.2">
    <molecule id="A4GSN8-2"/>
    <property type="protein sequence ID" value="AT1G79280.2"/>
    <property type="gene ID" value="AT1G79280"/>
</dbReference>
<dbReference type="Gramene" id="AT1G79280.3">
    <molecule id="A4GSN8-3"/>
    <property type="protein sequence ID" value="AT1G79280.3"/>
    <property type="gene ID" value="AT1G79280"/>
</dbReference>
<dbReference type="KEGG" id="ath:AT1G79280"/>
<dbReference type="Araport" id="AT1G79280"/>
<dbReference type="TAIR" id="AT1G79280">
    <property type="gene designation" value="NUA"/>
</dbReference>
<dbReference type="eggNOG" id="KOG4674">
    <property type="taxonomic scope" value="Eukaryota"/>
</dbReference>
<dbReference type="HOGENOM" id="CLU_001545_0_0_1"/>
<dbReference type="InParanoid" id="A4GSN8"/>
<dbReference type="OMA" id="HAQQNYE"/>
<dbReference type="PhylomeDB" id="A4GSN8"/>
<dbReference type="CD-CODE" id="33FCD62D">
    <property type="entry name" value="Centrosome"/>
</dbReference>
<dbReference type="CD-CODE" id="4299E36E">
    <property type="entry name" value="Nucleolus"/>
</dbReference>
<dbReference type="PRO" id="PR:A4GSN8"/>
<dbReference type="Proteomes" id="UP000006548">
    <property type="component" value="Chromosome 1"/>
</dbReference>
<dbReference type="ExpressionAtlas" id="A4GSN8">
    <property type="expression patterns" value="baseline and differential"/>
</dbReference>
<dbReference type="GO" id="GO:0005739">
    <property type="term" value="C:mitochondrion"/>
    <property type="evidence" value="ECO:0007005"/>
    <property type="project" value="TAIR"/>
</dbReference>
<dbReference type="GO" id="GO:0005635">
    <property type="term" value="C:nuclear envelope"/>
    <property type="evidence" value="ECO:0000314"/>
    <property type="project" value="TAIR"/>
</dbReference>
<dbReference type="GO" id="GO:0031965">
    <property type="term" value="C:nuclear membrane"/>
    <property type="evidence" value="ECO:0007669"/>
    <property type="project" value="UniProtKB-SubCell"/>
</dbReference>
<dbReference type="GO" id="GO:0005643">
    <property type="term" value="C:nuclear pore"/>
    <property type="evidence" value="ECO:0007669"/>
    <property type="project" value="UniProtKB-SubCell"/>
</dbReference>
<dbReference type="GO" id="GO:0005730">
    <property type="term" value="C:nucleolus"/>
    <property type="evidence" value="ECO:0007005"/>
    <property type="project" value="TAIR"/>
</dbReference>
<dbReference type="GO" id="GO:0009506">
    <property type="term" value="C:plasmodesma"/>
    <property type="evidence" value="ECO:0007005"/>
    <property type="project" value="TAIR"/>
</dbReference>
<dbReference type="GO" id="GO:0009910">
    <property type="term" value="P:negative regulation of flower development"/>
    <property type="evidence" value="ECO:0000315"/>
    <property type="project" value="TAIR"/>
</dbReference>
<dbReference type="GO" id="GO:0033234">
    <property type="term" value="P:negative regulation of protein sumoylation"/>
    <property type="evidence" value="ECO:0000315"/>
    <property type="project" value="TAIR"/>
</dbReference>
<dbReference type="GO" id="GO:0016973">
    <property type="term" value="P:poly(A)+ mRNA export from nucleus"/>
    <property type="evidence" value="ECO:0000315"/>
    <property type="project" value="TAIR"/>
</dbReference>
<dbReference type="GO" id="GO:0006606">
    <property type="term" value="P:protein import into nucleus"/>
    <property type="evidence" value="ECO:0007669"/>
    <property type="project" value="InterPro"/>
</dbReference>
<dbReference type="GO" id="GO:0048443">
    <property type="term" value="P:stamen development"/>
    <property type="evidence" value="ECO:0000315"/>
    <property type="project" value="TAIR"/>
</dbReference>
<dbReference type="InterPro" id="IPR012929">
    <property type="entry name" value="TPR/MLP1"/>
</dbReference>
<dbReference type="PANTHER" id="PTHR18898:SF2">
    <property type="entry name" value="NUCLEOPROTEIN TPR"/>
    <property type="match status" value="1"/>
</dbReference>
<dbReference type="PANTHER" id="PTHR18898">
    <property type="entry name" value="NUCLEOPROTEIN TPR-RELATED"/>
    <property type="match status" value="1"/>
</dbReference>
<dbReference type="Pfam" id="PF25481">
    <property type="entry name" value="Nucleoprot-TPR"/>
    <property type="match status" value="1"/>
</dbReference>
<dbReference type="Pfam" id="PF07926">
    <property type="entry name" value="TPR_MLP1_2"/>
    <property type="match status" value="1"/>
</dbReference>
<protein>
    <recommendedName>
        <fullName evidence="9 12">Nuclear-pore anchor</fullName>
    </recommendedName>
    <alternativeName>
        <fullName evidence="10">Protein TRANSLOCATED PROMOTER REGION</fullName>
        <shortName>AtTPR</shortName>
    </alternativeName>
</protein>
<organism>
    <name type="scientific">Arabidopsis thaliana</name>
    <name type="common">Mouse-ear cress</name>
    <dbReference type="NCBI Taxonomy" id="3702"/>
    <lineage>
        <taxon>Eukaryota</taxon>
        <taxon>Viridiplantae</taxon>
        <taxon>Streptophyta</taxon>
        <taxon>Embryophyta</taxon>
        <taxon>Tracheophyta</taxon>
        <taxon>Spermatophyta</taxon>
        <taxon>Magnoliopsida</taxon>
        <taxon>eudicotyledons</taxon>
        <taxon>Gunneridae</taxon>
        <taxon>Pentapetalae</taxon>
        <taxon>rosids</taxon>
        <taxon>malvids</taxon>
        <taxon>Brassicales</taxon>
        <taxon>Brassicaceae</taxon>
        <taxon>Camelineae</taxon>
        <taxon>Arabidopsis</taxon>
    </lineage>
</organism>
<accession>A4GSN8</accession>
<accession>F4IDK8</accession>
<accession>F4IDK9</accession>
<accession>O64521</accession>
<accession>O64522</accession>
<accession>O64524</accession>
<accession>O64525</accession>
<accession>Q8H7F1</accession>
<evidence type="ECO:0000255" key="1"/>
<evidence type="ECO:0000256" key="2">
    <source>
        <dbReference type="SAM" id="MobiDB-lite"/>
    </source>
</evidence>
<evidence type="ECO:0000269" key="3">
    <source>
    </source>
</evidence>
<evidence type="ECO:0000269" key="4">
    <source>
    </source>
</evidence>
<evidence type="ECO:0000269" key="5">
    <source>
    </source>
</evidence>
<evidence type="ECO:0000269" key="6">
    <source>
    </source>
</evidence>
<evidence type="ECO:0000269" key="7">
    <source>
    </source>
</evidence>
<evidence type="ECO:0000269" key="8">
    <source>
    </source>
</evidence>
<evidence type="ECO:0000303" key="9">
    <source>
    </source>
</evidence>
<evidence type="ECO:0000303" key="10">
    <source>
    </source>
</evidence>
<evidence type="ECO:0000303" key="11">
    <source>
    </source>
</evidence>
<evidence type="ECO:0000303" key="12">
    <source>
    </source>
</evidence>
<evidence type="ECO:0000305" key="13"/>
<evidence type="ECO:0000305" key="14">
    <source>
    </source>
</evidence>
<evidence type="ECO:0000312" key="15">
    <source>
        <dbReference type="Araport" id="AT1G79280"/>
    </source>
</evidence>
<evidence type="ECO:0000312" key="16">
    <source>
        <dbReference type="EMBL" id="AAC17058.1"/>
    </source>
</evidence>
<evidence type="ECO:0000312" key="17">
    <source>
        <dbReference type="EMBL" id="AAC17060.1"/>
    </source>
</evidence>
<evidence type="ECO:0000312" key="18">
    <source>
        <dbReference type="EMBL" id="AAC17073.1"/>
    </source>
</evidence>
<evidence type="ECO:0000312" key="19">
    <source>
        <dbReference type="EMBL" id="AAC17074.1"/>
    </source>
</evidence>
<evidence type="ECO:0007744" key="20">
    <source>
    </source>
</evidence>
<reference key="1">
    <citation type="journal article" date="2007" name="Plant Cell">
        <title>NUCLEAR PORE ANCHOR, the Arabidopsis homolog of Tpr/Mlp1/Mlp2/megator, is involved in mRNA export and SUMO homeostasis and affects diverse aspects of plant development.</title>
        <authorList>
            <person name="Xu X.M."/>
            <person name="Rose A."/>
            <person name="Muthuswamy S."/>
            <person name="Jeong S.Y."/>
            <person name="Venkatakrishnan S."/>
            <person name="Zhao Q."/>
            <person name="Meier I."/>
        </authorList>
    </citation>
    <scope>NUCLEOTIDE SEQUENCE [MRNA] (ISOFORM 1)</scope>
    <scope>FUNCTION</scope>
    <scope>INTERACTION WITH ESD4</scope>
    <scope>TISSUE SPECIFICITY</scope>
    <scope>SUBCELLULAR LOCATION</scope>
    <scope>DISRUPTION PHENOTYPE</scope>
</reference>
<reference key="2">
    <citation type="journal article" date="2000" name="Nature">
        <title>Sequence and analysis of chromosome 1 of the plant Arabidopsis thaliana.</title>
        <authorList>
            <person name="Theologis A."/>
            <person name="Ecker J.R."/>
            <person name="Palm C.J."/>
            <person name="Federspiel N.A."/>
            <person name="Kaul S."/>
            <person name="White O."/>
            <person name="Alonso J."/>
            <person name="Altafi H."/>
            <person name="Araujo R."/>
            <person name="Bowman C.L."/>
            <person name="Brooks S.Y."/>
            <person name="Buehler E."/>
            <person name="Chan A."/>
            <person name="Chao Q."/>
            <person name="Chen H."/>
            <person name="Cheuk R.F."/>
            <person name="Chin C.W."/>
            <person name="Chung M.K."/>
            <person name="Conn L."/>
            <person name="Conway A.B."/>
            <person name="Conway A.R."/>
            <person name="Creasy T.H."/>
            <person name="Dewar K."/>
            <person name="Dunn P."/>
            <person name="Etgu P."/>
            <person name="Feldblyum T.V."/>
            <person name="Feng J.-D."/>
            <person name="Fong B."/>
            <person name="Fujii C.Y."/>
            <person name="Gill J.E."/>
            <person name="Goldsmith A.D."/>
            <person name="Haas B."/>
            <person name="Hansen N.F."/>
            <person name="Hughes B."/>
            <person name="Huizar L."/>
            <person name="Hunter J.L."/>
            <person name="Jenkins J."/>
            <person name="Johnson-Hopson C."/>
            <person name="Khan S."/>
            <person name="Khaykin E."/>
            <person name="Kim C.J."/>
            <person name="Koo H.L."/>
            <person name="Kremenetskaia I."/>
            <person name="Kurtz D.B."/>
            <person name="Kwan A."/>
            <person name="Lam B."/>
            <person name="Langin-Hooper S."/>
            <person name="Lee A."/>
            <person name="Lee J.M."/>
            <person name="Lenz C.A."/>
            <person name="Li J.H."/>
            <person name="Li Y.-P."/>
            <person name="Lin X."/>
            <person name="Liu S.X."/>
            <person name="Liu Z.A."/>
            <person name="Luros J.S."/>
            <person name="Maiti R."/>
            <person name="Marziali A."/>
            <person name="Militscher J."/>
            <person name="Miranda M."/>
            <person name="Nguyen M."/>
            <person name="Nierman W.C."/>
            <person name="Osborne B.I."/>
            <person name="Pai G."/>
            <person name="Peterson J."/>
            <person name="Pham P.K."/>
            <person name="Rizzo M."/>
            <person name="Rooney T."/>
            <person name="Rowley D."/>
            <person name="Sakano H."/>
            <person name="Salzberg S.L."/>
            <person name="Schwartz J.R."/>
            <person name="Shinn P."/>
            <person name="Southwick A.M."/>
            <person name="Sun H."/>
            <person name="Tallon L.J."/>
            <person name="Tambunga G."/>
            <person name="Toriumi M.J."/>
            <person name="Town C.D."/>
            <person name="Utterback T."/>
            <person name="Van Aken S."/>
            <person name="Vaysberg M."/>
            <person name="Vysotskaia V.S."/>
            <person name="Walker M."/>
            <person name="Wu D."/>
            <person name="Yu G."/>
            <person name="Fraser C.M."/>
            <person name="Venter J.C."/>
            <person name="Davis R.W."/>
        </authorList>
    </citation>
    <scope>NUCLEOTIDE SEQUENCE [LARGE SCALE GENOMIC DNA]</scope>
    <source>
        <strain>cv. Columbia</strain>
    </source>
</reference>
<reference key="3">
    <citation type="journal article" date="2017" name="Plant J.">
        <title>Araport11: a complete reannotation of the Arabidopsis thaliana reference genome.</title>
        <authorList>
            <person name="Cheng C.Y."/>
            <person name="Krishnakumar V."/>
            <person name="Chan A.P."/>
            <person name="Thibaud-Nissen F."/>
            <person name="Schobel S."/>
            <person name="Town C.D."/>
        </authorList>
    </citation>
    <scope>GENOME REANNOTATION</scope>
    <source>
        <strain>cv. Columbia</strain>
    </source>
</reference>
<reference key="4">
    <citation type="submission" date="1998-08" db="EMBL/GenBank/DDBJ databases">
        <title>Signal Peptide Selection derived cDNAs from Arabidopsis thaliana leaves and guard cells.</title>
        <authorList>
            <person name="Stracke R."/>
            <person name="Palme K."/>
        </authorList>
    </citation>
    <scope>NUCLEOTIDE SEQUENCE [MRNA] OF 1411-1558</scope>
</reference>
<reference key="5">
    <citation type="journal article" date="2007" name="Plant Physiol.">
        <title>The nuclear pore protein AtTPR is required for RNA homeostasis, flowering time, and auxin signaling.</title>
        <authorList>
            <person name="Jacob Y."/>
            <person name="Mongkolsiriwatana C."/>
            <person name="Veley K.M."/>
            <person name="Kim S.Y."/>
            <person name="Michaels S.D."/>
        </authorList>
    </citation>
    <scope>FUNCTION</scope>
    <scope>INDUCTION</scope>
    <scope>TISSUE SPECIFICITY</scope>
    <scope>DISRUPTION PHENOTYPE</scope>
</reference>
<reference key="6">
    <citation type="journal article" date="2007" name="Plant Signal. Behav.">
        <title>NUA Activities at the Plant Nuclear Pore.</title>
        <authorList>
            <person name="Xu X.M."/>
            <person name="Rose A."/>
            <person name="Meier I."/>
        </authorList>
    </citation>
    <scope>FUNCTION</scope>
    <scope>SUBCELLULAR LOCATION</scope>
</reference>
<reference key="7">
    <citation type="journal article" date="2008" name="J. Proteome Res.">
        <title>Site-specific phosphorylation profiling of Arabidopsis proteins by mass spectrometry and peptide chip analysis.</title>
        <authorList>
            <person name="de la Fuente van Bentem S."/>
            <person name="Anrather D."/>
            <person name="Dohnal I."/>
            <person name="Roitinger E."/>
            <person name="Csaszar E."/>
            <person name="Joore J."/>
            <person name="Buijnink J."/>
            <person name="Carreri A."/>
            <person name="Forzani C."/>
            <person name="Lorkovic Z.J."/>
            <person name="Barta A."/>
            <person name="Lecourieux D."/>
            <person name="Verhounig A."/>
            <person name="Jonak C."/>
            <person name="Hirt H."/>
        </authorList>
    </citation>
    <scope>IDENTIFICATION BY MASS SPECTROMETRY [LARGE SCALE ANALYSIS]</scope>
    <source>
        <tissue>Root</tissue>
    </source>
</reference>
<reference key="8">
    <citation type="journal article" date="2008" name="Plant Signal. Behav.">
        <title>Peering through the pore: The role of AtTPR in nuclear transport and development.</title>
        <authorList>
            <person name="Jacob Y."/>
            <person name="Michaels S.D."/>
        </authorList>
    </citation>
    <scope>FUNCTION</scope>
</reference>
<reference key="9">
    <citation type="journal article" date="2009" name="Plant Physiol.">
        <title>Large-scale Arabidopsis phosphoproteome profiling reveals novel chloroplast kinase substrates and phosphorylation networks.</title>
        <authorList>
            <person name="Reiland S."/>
            <person name="Messerli G."/>
            <person name="Baerenfaller K."/>
            <person name="Gerrits B."/>
            <person name="Endler A."/>
            <person name="Grossmann J."/>
            <person name="Gruissem W."/>
            <person name="Baginsky S."/>
        </authorList>
    </citation>
    <scope>PHOSPHORYLATION [LARGE SCALE ANALYSIS] AT SER-2022</scope>
    <scope>IDENTIFICATION BY MASS SPECTROMETRY [LARGE SCALE ANALYSIS]</scope>
</reference>
<reference key="10">
    <citation type="journal article" date="2010" name="Plant Cell">
        <title>Identification and characterization of nuclear pore complex components in Arabidopsis thaliana.</title>
        <authorList>
            <person name="Tamura K."/>
            <person name="Fukao Y."/>
            <person name="Iwamoto M."/>
            <person name="Haraguchi T."/>
            <person name="Hara-Nishimura I."/>
        </authorList>
    </citation>
    <scope>IDENTIFICATION IN THE NUCLEAR PORE COMPLEX BY MASS SPECTROMETRY</scope>
    <scope>SUBCELLULAR LOCATION</scope>
    <scope>NOMENCLATURE</scope>
</reference>
<reference key="11">
    <citation type="journal article" date="2011" name="Planta">
        <title>Genetic and environmental changes in SUMO homeostasis lead to nuclear mRNA retention in plants.</title>
        <authorList>
            <person name="Muthuswamy S."/>
            <person name="Meier I."/>
        </authorList>
    </citation>
    <scope>FUNCTION</scope>
    <scope>DISRUPTION PHENOTYPE</scope>
</reference>
<reference key="12">
    <citation type="journal article" date="2012" name="Plant Mol. Biol.">
        <title>Functional interaction between the Arabidopsis orthologs of spindle assembly checkpoint proteins MAD1 and MAD2 and the nucleoporin NUA.</title>
        <authorList>
            <person name="Ding D."/>
            <person name="Muthuswamy S."/>
            <person name="Meier I."/>
        </authorList>
    </citation>
    <scope>FUNCTION</scope>
    <scope>INTERACTION WITH MAD1</scope>
    <scope>DISRUPTION PHENOTYPE</scope>
</reference>
<gene>
    <name evidence="9 12" type="primary">NUA</name>
    <name evidence="10" type="synonym">TPR</name>
    <name evidence="15" type="ordered locus">At1g79280</name>
    <name type="ORF">YUP8H12R.11</name>
    <name type="ORF">YUP8H12R.12</name>
    <name type="ORF">YUP8H12R.8</name>
    <name evidence="16 17 18 19" type="ORF">YUP8H12R.9</name>
</gene>